<protein>
    <recommendedName>
        <fullName>Uncharacterized protein in pepT 5'region</fullName>
    </recommendedName>
    <alternativeName>
        <fullName>ORF2</fullName>
    </alternativeName>
</protein>
<name>YPE2_LACLC</name>
<accession>P42021</accession>
<sequence>TTAIEPFISLGDK</sequence>
<dbReference type="EMBL" id="L27596">
    <property type="protein sequence ID" value="AAA20625.1"/>
    <property type="molecule type" value="Genomic_DNA"/>
</dbReference>
<organism>
    <name type="scientific">Lactococcus lactis subsp. cremoris</name>
    <name type="common">Streptococcus cremoris</name>
    <dbReference type="NCBI Taxonomy" id="1359"/>
    <lineage>
        <taxon>Bacteria</taxon>
        <taxon>Bacillati</taxon>
        <taxon>Bacillota</taxon>
        <taxon>Bacilli</taxon>
        <taxon>Lactobacillales</taxon>
        <taxon>Streptococcaceae</taxon>
        <taxon>Lactococcus</taxon>
    </lineage>
</organism>
<reference key="1">
    <citation type="journal article" date="1994" name="J. Bacteriol.">
        <title>Tripeptidase gene (pepT) of Lactococcus lactis: molecular cloning and nucleotide sequencing of pepT and construction of a chromosomal deletion mutant.</title>
        <authorList>
            <person name="Mierau I."/>
            <person name="Haandrikman A.J."/>
            <person name="Velterop O."/>
            <person name="Tan P.S.T."/>
            <person name="Leenhouts K.L."/>
            <person name="Konings W.N."/>
            <person name="Venema G."/>
            <person name="Kok J."/>
        </authorList>
    </citation>
    <scope>NUCLEOTIDE SEQUENCE [GENOMIC DNA]</scope>
</reference>
<proteinExistence type="predicted"/>
<feature type="chain" id="PRO_0000066392" description="Uncharacterized protein in pepT 5'region">
    <location>
        <begin position="1" status="less than"/>
        <end position="13"/>
    </location>
</feature>
<feature type="non-terminal residue">
    <location>
        <position position="1"/>
    </location>
</feature>